<comment type="function">
    <text evidence="1">Replicates viral genomic DNA. The replication complex is composed of six viral proteins: the DNA polymerase, processivity factor, primase, primase-associated factor, helicase, and ssDNA-binding protein. Additionally, the polymerase contains an intrinsic ribonuclease H (RNase H) activity that specifically degrades RNA/DNA heteroduplexes or duplex DNA substrates in the 5' to 3' direction. Therefore, it can catalyze the excision of the RNA primers that initiate the synthesis of Okazaki fragments at a replication fork during viral DNA replication (By similarity).</text>
</comment>
<comment type="catalytic activity">
    <reaction>
        <text>DNA(n) + a 2'-deoxyribonucleoside 5'-triphosphate = DNA(n+1) + diphosphate</text>
        <dbReference type="Rhea" id="RHEA:22508"/>
        <dbReference type="Rhea" id="RHEA-COMP:17339"/>
        <dbReference type="Rhea" id="RHEA-COMP:17340"/>
        <dbReference type="ChEBI" id="CHEBI:33019"/>
        <dbReference type="ChEBI" id="CHEBI:61560"/>
        <dbReference type="ChEBI" id="CHEBI:173112"/>
        <dbReference type="EC" id="2.7.7.7"/>
    </reaction>
</comment>
<comment type="catalytic activity">
    <reaction>
        <text>Endonucleolytic cleavage to 5'-phosphomonoester.</text>
        <dbReference type="EC" id="3.1.26.4"/>
    </reaction>
</comment>
<comment type="subunit">
    <text evidence="1">Forms a complex with the ssDNA-binding protein, the DNA polymerase processivity factor, and the alkaline exonuclease. Interacts with the helicase-primase complex composed of the primase, the helicase and the primase-associated factor; this interaction may coordinate leading and lagging strand DNA synthesis at the replication fork (By similarity).</text>
</comment>
<comment type="subcellular location">
    <subcellularLocation>
        <location evidence="1">Host nucleus</location>
    </subcellularLocation>
    <text evidence="1">The protein is present at discrete sites in nuclei, called replication compartments where viral DNA replication occurs.</text>
</comment>
<comment type="similarity">
    <text evidence="3">Belongs to the DNA polymerase type-B family.</text>
</comment>
<keyword id="KW-0235">DNA replication</keyword>
<keyword id="KW-0238">DNA-binding</keyword>
<keyword id="KW-0239">DNA-directed DNA polymerase</keyword>
<keyword id="KW-0255">Endonuclease</keyword>
<keyword id="KW-1048">Host nucleus</keyword>
<keyword id="KW-0378">Hydrolase</keyword>
<keyword id="KW-0511">Multifunctional enzyme</keyword>
<keyword id="KW-0540">Nuclease</keyword>
<keyword id="KW-0548">Nucleotidyltransferase</keyword>
<keyword id="KW-1185">Reference proteome</keyword>
<keyword id="KW-0808">Transferase</keyword>
<keyword id="KW-1194">Viral DNA replication</keyword>
<organism>
    <name type="scientific">Equine herpesvirus 1 (strain Ab4p)</name>
    <name type="common">EHV-1</name>
    <name type="synonym">Equine abortion virus</name>
    <dbReference type="NCBI Taxonomy" id="31520"/>
    <lineage>
        <taxon>Viruses</taxon>
        <taxon>Duplodnaviria</taxon>
        <taxon>Heunggongvirae</taxon>
        <taxon>Peploviricota</taxon>
        <taxon>Herviviricetes</taxon>
        <taxon>Herpesvirales</taxon>
        <taxon>Orthoherpesviridae</taxon>
        <taxon>Alphaherpesvirinae</taxon>
        <taxon>Varicellovirus</taxon>
        <taxon>Varicellovirus equidalpha1</taxon>
        <taxon>Equid alphaherpesvirus 1</taxon>
    </lineage>
</organism>
<organismHost>
    <name type="scientific">Equus caballus</name>
    <name type="common">Horse</name>
    <dbReference type="NCBI Taxonomy" id="9796"/>
</organismHost>
<feature type="chain" id="PRO_0000046518" description="DNA polymerase catalytic subunit">
    <location>
        <begin position="1"/>
        <end position="1220"/>
    </location>
</feature>
<feature type="region of interest" description="Disordered" evidence="2">
    <location>
        <begin position="21"/>
        <end position="43"/>
    </location>
</feature>
<feature type="region of interest" description="Disordered" evidence="2">
    <location>
        <begin position="641"/>
        <end position="691"/>
    </location>
</feature>
<feature type="compositionally biased region" description="Polar residues" evidence="2">
    <location>
        <begin position="646"/>
        <end position="660"/>
    </location>
</feature>
<accession>P28858</accession>
<accession>Q6DLI1</accession>
<proteinExistence type="inferred from homology"/>
<dbReference type="EC" id="2.7.7.7"/>
<dbReference type="EC" id="3.1.26.4"/>
<dbReference type="EMBL" id="AY665713">
    <property type="protein sequence ID" value="AAT67287.1"/>
    <property type="molecule type" value="Genomic_DNA"/>
</dbReference>
<dbReference type="PIR" id="D36798">
    <property type="entry name" value="DJBEC3"/>
</dbReference>
<dbReference type="SMR" id="P28858"/>
<dbReference type="IntAct" id="P28858">
    <property type="interactions" value="1"/>
</dbReference>
<dbReference type="KEGG" id="vg:1487570"/>
<dbReference type="Proteomes" id="UP000001189">
    <property type="component" value="Segment"/>
</dbReference>
<dbReference type="GO" id="GO:0042025">
    <property type="term" value="C:host cell nucleus"/>
    <property type="evidence" value="ECO:0007669"/>
    <property type="project" value="UniProtKB-SubCell"/>
</dbReference>
<dbReference type="GO" id="GO:0003677">
    <property type="term" value="F:DNA binding"/>
    <property type="evidence" value="ECO:0007669"/>
    <property type="project" value="UniProtKB-KW"/>
</dbReference>
<dbReference type="GO" id="GO:0034061">
    <property type="term" value="F:DNA polymerase activity"/>
    <property type="evidence" value="ECO:0000314"/>
    <property type="project" value="AgBase"/>
</dbReference>
<dbReference type="GO" id="GO:0003887">
    <property type="term" value="F:DNA-directed DNA polymerase activity"/>
    <property type="evidence" value="ECO:0007669"/>
    <property type="project" value="UniProtKB-KW"/>
</dbReference>
<dbReference type="GO" id="GO:0000166">
    <property type="term" value="F:nucleotide binding"/>
    <property type="evidence" value="ECO:0007669"/>
    <property type="project" value="InterPro"/>
</dbReference>
<dbReference type="GO" id="GO:0004523">
    <property type="term" value="F:RNA-DNA hybrid ribonuclease activity"/>
    <property type="evidence" value="ECO:0007669"/>
    <property type="project" value="UniProtKB-EC"/>
</dbReference>
<dbReference type="GO" id="GO:0006261">
    <property type="term" value="P:DNA-templated DNA replication"/>
    <property type="evidence" value="ECO:0007669"/>
    <property type="project" value="TreeGrafter"/>
</dbReference>
<dbReference type="GO" id="GO:1902074">
    <property type="term" value="P:response to salt"/>
    <property type="evidence" value="ECO:0000314"/>
    <property type="project" value="AgBase"/>
</dbReference>
<dbReference type="GO" id="GO:0039693">
    <property type="term" value="P:viral DNA genome replication"/>
    <property type="evidence" value="ECO:0007669"/>
    <property type="project" value="UniProtKB-KW"/>
</dbReference>
<dbReference type="FunFam" id="1.10.287.690:FF:000006">
    <property type="entry name" value="DNA polymerase"/>
    <property type="match status" value="1"/>
</dbReference>
<dbReference type="FunFam" id="1.10.132.60:FF:000011">
    <property type="entry name" value="DNA polymerase catalytic subunit"/>
    <property type="match status" value="1"/>
</dbReference>
<dbReference type="FunFam" id="3.30.420.10:FF:000260">
    <property type="entry name" value="DNA polymerase catalytic subunit"/>
    <property type="match status" value="1"/>
</dbReference>
<dbReference type="Gene3D" id="1.10.132.60">
    <property type="entry name" value="DNA polymerase family B, C-terminal domain"/>
    <property type="match status" value="1"/>
</dbReference>
<dbReference type="Gene3D" id="1.10.287.690">
    <property type="entry name" value="Helix hairpin bin"/>
    <property type="match status" value="1"/>
</dbReference>
<dbReference type="Gene3D" id="3.90.1600.10">
    <property type="entry name" value="Palm domain of DNA polymerase"/>
    <property type="match status" value="1"/>
</dbReference>
<dbReference type="Gene3D" id="3.30.420.10">
    <property type="entry name" value="Ribonuclease H-like superfamily/Ribonuclease H"/>
    <property type="match status" value="1"/>
</dbReference>
<dbReference type="InterPro" id="IPR006172">
    <property type="entry name" value="DNA-dir_DNA_pol_B"/>
</dbReference>
<dbReference type="InterPro" id="IPR017964">
    <property type="entry name" value="DNA-dir_DNA_pol_B_CS"/>
</dbReference>
<dbReference type="InterPro" id="IPR006133">
    <property type="entry name" value="DNA-dir_DNA_pol_B_exonuc"/>
</dbReference>
<dbReference type="InterPro" id="IPR006134">
    <property type="entry name" value="DNA-dir_DNA_pol_B_multi_dom"/>
</dbReference>
<dbReference type="InterPro" id="IPR043502">
    <property type="entry name" value="DNA/RNA_pol_sf"/>
</dbReference>
<dbReference type="InterPro" id="IPR042087">
    <property type="entry name" value="DNA_pol_B_thumb"/>
</dbReference>
<dbReference type="InterPro" id="IPR023211">
    <property type="entry name" value="DNA_pol_palm_dom_sf"/>
</dbReference>
<dbReference type="InterPro" id="IPR050240">
    <property type="entry name" value="DNA_pol_type-B"/>
</dbReference>
<dbReference type="InterPro" id="IPR012337">
    <property type="entry name" value="RNaseH-like_sf"/>
</dbReference>
<dbReference type="InterPro" id="IPR036397">
    <property type="entry name" value="RNaseH_sf"/>
</dbReference>
<dbReference type="PANTHER" id="PTHR10322">
    <property type="entry name" value="DNA POLYMERASE CATALYTIC SUBUNIT"/>
    <property type="match status" value="1"/>
</dbReference>
<dbReference type="PANTHER" id="PTHR10322:SF23">
    <property type="entry name" value="DNA POLYMERASE DELTA CATALYTIC SUBUNIT"/>
    <property type="match status" value="1"/>
</dbReference>
<dbReference type="Pfam" id="PF00136">
    <property type="entry name" value="DNA_pol_B"/>
    <property type="match status" value="1"/>
</dbReference>
<dbReference type="Pfam" id="PF03104">
    <property type="entry name" value="DNA_pol_B_exo1"/>
    <property type="match status" value="1"/>
</dbReference>
<dbReference type="PRINTS" id="PR00106">
    <property type="entry name" value="DNAPOLB"/>
</dbReference>
<dbReference type="SMART" id="SM00486">
    <property type="entry name" value="POLBc"/>
    <property type="match status" value="1"/>
</dbReference>
<dbReference type="SUPFAM" id="SSF56672">
    <property type="entry name" value="DNA/RNA polymerases"/>
    <property type="match status" value="1"/>
</dbReference>
<dbReference type="SUPFAM" id="SSF53098">
    <property type="entry name" value="Ribonuclease H-like"/>
    <property type="match status" value="1"/>
</dbReference>
<dbReference type="PROSITE" id="PS00116">
    <property type="entry name" value="DNA_POLYMERASE_B"/>
    <property type="match status" value="1"/>
</dbReference>
<sequence>MAAREQANSVRRSGFFNPFIGKRPFFRPGSGQTAETERPRPPQHSYCTEVGSFKFIAPRCLDEEAPADQRRGVHVGTLERPPKVYCDGSEYDVLNFASGGCWPRRIRVWNGQDFRGDGFNPRFERFHVYDIVETSESASHDDPSRFAELSRPSGSVVTLLGMSECGKRVAVHVYGVRHYFYMAKAEVDSACGITTEAELVRAMVDCAHSSALSAALGNGNGGKQSGGSGGGWWGGKHVSADCFKVETVCHTTLYYFGSKPALYYRVSASSSRLGGFICDNFHPEITKFEGSVDVTTRLLLDNENFTSFGWYRLRPGTHGERVQLRPVERHVTSSDVEINCTPDNLEPIPDEAAWPDYKLMCFDIECKAGTGNEMAFPVATNQEDLVIQISCLLYSLATQNHEHTLLFSLGSCDISEEYSFACVQRGEPRPTVLEFDSEYELLVAFLTFLKQYSPEFATGYNIVNFDWAYIVNKVTSVYNIKLDGYGKFNKGGLFKVWDIATNHFQKKSKVKINGLISLDMYSVATEKLKLPSYKLDAVVGDVLGEHKIDLPYKEIPSYYAGGPDRRGVIGEYCIQDSRLVGKLFFKYLPHLELSAVAKLARITLTRVIFDGQQIRVYTCLLKLARERNFILPDNRRRFDSQADAASETSELAMDSQSHAFDSTDEPDGVDGTPDAAGSGATSENGGGKPGVGRAVGYQGAKVLDPVSGFHVDPVVVFDFASLYPSIIQAHNLCFTTLALDEVDLAGLQPSVDYSTFEVGDQKLFFVHAHIRESLLGILLRDWLAMRKAVRARIPTSTPEEAVLLDKQQSAIKVICNSVYGFTGVANGLLPCLRIAATVTTIGRDMLLKTRDYVHSRWATRELLEDNFPGAIGFRNHKPYSVRVIYGDTDSVFIKFVGLTYEGVSELGDAMSRQISADLFRAPIKLECEKTFQRLLLITKKKYIGVINGGKMLMKGVDLVRKNNCSFINLYARHLVDLLLYDEDVATAAAEVTDVPPAEWVGRPLPSGFDKFGRVLVEAYNRITAPNLDVREFVMTAELSRSPESYTNKRLPHLTVYFKLAMRNEELPSVKERIPYVIVAQTEAAEREAGVVNSMRGTAQNPVVTKTARPQPKRKLLVSDLAEDPTYVSENDVPLNTDYYFSHLLGTISVTFKALFGNDVRTTENLLKRFIPETPHKTPTKTQALLERAGFEKLTPFTPEEESRRILHTVFCTLEAAPHQS</sequence>
<evidence type="ECO:0000250" key="1"/>
<evidence type="ECO:0000256" key="2">
    <source>
        <dbReference type="SAM" id="MobiDB-lite"/>
    </source>
</evidence>
<evidence type="ECO:0000305" key="3"/>
<gene>
    <name type="ordered locus">30</name>
</gene>
<reference key="1">
    <citation type="journal article" date="1992" name="Virology">
        <title>The DNA sequence of equine herpesvirus-1.</title>
        <authorList>
            <person name="Telford E.A.R."/>
            <person name="Watson M.S."/>
            <person name="McBride K."/>
            <person name="Davison A.J."/>
        </authorList>
    </citation>
    <scope>NUCLEOTIDE SEQUENCE [LARGE SCALE GENOMIC DNA]</scope>
</reference>
<name>DPOL_EHV1B</name>
<protein>
    <recommendedName>
        <fullName>DNA polymerase catalytic subunit</fullName>
        <ecNumber>2.7.7.7</ecNumber>
        <ecNumber>3.1.26.4</ecNumber>
    </recommendedName>
</protein>